<comment type="catalytic activity">
    <reaction evidence="1">
        <text>2 reduced [2Fe-2S]-[ferredoxin] + NADP(+) + H(+) = 2 oxidized [2Fe-2S]-[ferredoxin] + NADPH</text>
        <dbReference type="Rhea" id="RHEA:20125"/>
        <dbReference type="Rhea" id="RHEA-COMP:10000"/>
        <dbReference type="Rhea" id="RHEA-COMP:10001"/>
        <dbReference type="ChEBI" id="CHEBI:15378"/>
        <dbReference type="ChEBI" id="CHEBI:33737"/>
        <dbReference type="ChEBI" id="CHEBI:33738"/>
        <dbReference type="ChEBI" id="CHEBI:57783"/>
        <dbReference type="ChEBI" id="CHEBI:58349"/>
        <dbReference type="EC" id="1.18.1.2"/>
    </reaction>
</comment>
<comment type="cofactor">
    <cofactor evidence="1">
        <name>FAD</name>
        <dbReference type="ChEBI" id="CHEBI:57692"/>
    </cofactor>
    <text evidence="1">Binds 1 FAD per subunit.</text>
</comment>
<comment type="subunit">
    <text evidence="1">Homodimer.</text>
</comment>
<comment type="similarity">
    <text evidence="1">Belongs to the ferredoxin--NADP reductase type 2 family.</text>
</comment>
<gene>
    <name type="ordered locus">Veis_4316</name>
</gene>
<dbReference type="EC" id="1.18.1.2" evidence="1"/>
<dbReference type="EMBL" id="CP000542">
    <property type="protein sequence ID" value="ABM60019.1"/>
    <property type="molecule type" value="Genomic_DNA"/>
</dbReference>
<dbReference type="RefSeq" id="WP_011812005.1">
    <property type="nucleotide sequence ID" value="NC_008786.1"/>
</dbReference>
<dbReference type="SMR" id="A1WQW2"/>
<dbReference type="STRING" id="391735.Veis_4316"/>
<dbReference type="GeneID" id="76462635"/>
<dbReference type="KEGG" id="vei:Veis_4316"/>
<dbReference type="eggNOG" id="COG0492">
    <property type="taxonomic scope" value="Bacteria"/>
</dbReference>
<dbReference type="HOGENOM" id="CLU_031864_5_5_4"/>
<dbReference type="Proteomes" id="UP000000374">
    <property type="component" value="Chromosome"/>
</dbReference>
<dbReference type="GO" id="GO:0004324">
    <property type="term" value="F:ferredoxin-NADP+ reductase activity"/>
    <property type="evidence" value="ECO:0007669"/>
    <property type="project" value="UniProtKB-UniRule"/>
</dbReference>
<dbReference type="GO" id="GO:0050660">
    <property type="term" value="F:flavin adenine dinucleotide binding"/>
    <property type="evidence" value="ECO:0007669"/>
    <property type="project" value="UniProtKB-UniRule"/>
</dbReference>
<dbReference type="GO" id="GO:0050661">
    <property type="term" value="F:NADP binding"/>
    <property type="evidence" value="ECO:0007669"/>
    <property type="project" value="UniProtKB-UniRule"/>
</dbReference>
<dbReference type="Gene3D" id="3.50.50.60">
    <property type="entry name" value="FAD/NAD(P)-binding domain"/>
    <property type="match status" value="2"/>
</dbReference>
<dbReference type="HAMAP" id="MF_01685">
    <property type="entry name" value="FENR2"/>
    <property type="match status" value="1"/>
</dbReference>
<dbReference type="InterPro" id="IPR036188">
    <property type="entry name" value="FAD/NAD-bd_sf"/>
</dbReference>
<dbReference type="InterPro" id="IPR023753">
    <property type="entry name" value="FAD/NAD-binding_dom"/>
</dbReference>
<dbReference type="InterPro" id="IPR022890">
    <property type="entry name" value="Fd--NADP_Rdtase_type_2"/>
</dbReference>
<dbReference type="InterPro" id="IPR050097">
    <property type="entry name" value="Ferredoxin-NADP_redctase_2"/>
</dbReference>
<dbReference type="PANTHER" id="PTHR48105">
    <property type="entry name" value="THIOREDOXIN REDUCTASE 1-RELATED-RELATED"/>
    <property type="match status" value="1"/>
</dbReference>
<dbReference type="Pfam" id="PF07992">
    <property type="entry name" value="Pyr_redox_2"/>
    <property type="match status" value="1"/>
</dbReference>
<dbReference type="PRINTS" id="PR00368">
    <property type="entry name" value="FADPNR"/>
</dbReference>
<dbReference type="PRINTS" id="PR00469">
    <property type="entry name" value="PNDRDTASEII"/>
</dbReference>
<dbReference type="SUPFAM" id="SSF51905">
    <property type="entry name" value="FAD/NAD(P)-binding domain"/>
    <property type="match status" value="2"/>
</dbReference>
<protein>
    <recommendedName>
        <fullName evidence="1">Ferredoxin--NADP reductase</fullName>
        <shortName evidence="1">FNR</shortName>
        <shortName evidence="1">Fd-NADP(+) reductase</shortName>
        <ecNumber evidence="1">1.18.1.2</ecNumber>
    </recommendedName>
</protein>
<reference key="1">
    <citation type="submission" date="2006-12" db="EMBL/GenBank/DDBJ databases">
        <title>Complete sequence of chromosome 1 of Verminephrobacter eiseniae EF01-2.</title>
        <authorList>
            <person name="Copeland A."/>
            <person name="Lucas S."/>
            <person name="Lapidus A."/>
            <person name="Barry K."/>
            <person name="Detter J.C."/>
            <person name="Glavina del Rio T."/>
            <person name="Dalin E."/>
            <person name="Tice H."/>
            <person name="Pitluck S."/>
            <person name="Chertkov O."/>
            <person name="Brettin T."/>
            <person name="Bruce D."/>
            <person name="Han C."/>
            <person name="Tapia R."/>
            <person name="Gilna P."/>
            <person name="Schmutz J."/>
            <person name="Larimer F."/>
            <person name="Land M."/>
            <person name="Hauser L."/>
            <person name="Kyrpides N."/>
            <person name="Kim E."/>
            <person name="Stahl D."/>
            <person name="Richardson P."/>
        </authorList>
    </citation>
    <scope>NUCLEOTIDE SEQUENCE [LARGE SCALE GENOMIC DNA]</scope>
    <source>
        <strain>EF01-2</strain>
    </source>
</reference>
<proteinExistence type="inferred from homology"/>
<name>FENR_VEREI</name>
<accession>A1WQW2</accession>
<organism>
    <name type="scientific">Verminephrobacter eiseniae (strain EF01-2)</name>
    <dbReference type="NCBI Taxonomy" id="391735"/>
    <lineage>
        <taxon>Bacteria</taxon>
        <taxon>Pseudomonadati</taxon>
        <taxon>Pseudomonadota</taxon>
        <taxon>Betaproteobacteria</taxon>
        <taxon>Burkholderiales</taxon>
        <taxon>Comamonadaceae</taxon>
        <taxon>Verminephrobacter</taxon>
    </lineage>
</organism>
<evidence type="ECO:0000255" key="1">
    <source>
        <dbReference type="HAMAP-Rule" id="MF_01685"/>
    </source>
</evidence>
<keyword id="KW-0274">FAD</keyword>
<keyword id="KW-0285">Flavoprotein</keyword>
<keyword id="KW-0521">NADP</keyword>
<keyword id="KW-0560">Oxidoreductase</keyword>
<keyword id="KW-1185">Reference proteome</keyword>
<feature type="chain" id="PRO_0000364982" description="Ferredoxin--NADP reductase">
    <location>
        <begin position="1"/>
        <end position="353"/>
    </location>
</feature>
<feature type="binding site" evidence="1">
    <location>
        <position position="33"/>
    </location>
    <ligand>
        <name>FAD</name>
        <dbReference type="ChEBI" id="CHEBI:57692"/>
    </ligand>
</feature>
<feature type="binding site" evidence="1">
    <location>
        <position position="41"/>
    </location>
    <ligand>
        <name>FAD</name>
        <dbReference type="ChEBI" id="CHEBI:57692"/>
    </ligand>
</feature>
<feature type="binding site" evidence="1">
    <location>
        <position position="46"/>
    </location>
    <ligand>
        <name>FAD</name>
        <dbReference type="ChEBI" id="CHEBI:57692"/>
    </ligand>
</feature>
<feature type="binding site" evidence="1">
    <location>
        <position position="86"/>
    </location>
    <ligand>
        <name>FAD</name>
        <dbReference type="ChEBI" id="CHEBI:57692"/>
    </ligand>
</feature>
<feature type="binding site" evidence="1">
    <location>
        <position position="121"/>
    </location>
    <ligand>
        <name>FAD</name>
        <dbReference type="ChEBI" id="CHEBI:57692"/>
    </ligand>
</feature>
<feature type="binding site" evidence="1">
    <location>
        <position position="293"/>
    </location>
    <ligand>
        <name>FAD</name>
        <dbReference type="ChEBI" id="CHEBI:57692"/>
    </ligand>
</feature>
<feature type="binding site" evidence="1">
    <location>
        <position position="333"/>
    </location>
    <ligand>
        <name>FAD</name>
        <dbReference type="ChEBI" id="CHEBI:57692"/>
    </ligand>
</feature>
<sequence>MIETDAVVIGAGPVGLFQAFQLGLQGIGAHLIDALPQAGGQCVTLYGDKPIYDIAGIPVCTGRELIDRLLAQLAPFKPHWHLNTLVAALAPQPDARLLLETDTGARLLARSVFIAAGVGAFVPRTLKMAGMERFVGTQLFYQVLPAGMDVTGRQVIVHGGDEGAVACAVELAEQGRAARVSLLYRRDLFQAPEALLQRLQRLRAAGRIAVEVGQITGIASSGMPQCSTLRALQVVDAQGASHALPVDVLVAVLGISPRLGPLTDWGMAMARKQLQVDTEAFRTSVPGIYAVGDINTYPGKRRLILCGFHEATLAAFAAAEALKGDKVALQYTTTSAHLHRLLGVAPASGATGP</sequence>